<organism>
    <name type="scientific">Alkaliphilus metalliredigens (strain QYMF)</name>
    <dbReference type="NCBI Taxonomy" id="293826"/>
    <lineage>
        <taxon>Bacteria</taxon>
        <taxon>Bacillati</taxon>
        <taxon>Bacillota</taxon>
        <taxon>Clostridia</taxon>
        <taxon>Peptostreptococcales</taxon>
        <taxon>Natronincolaceae</taxon>
        <taxon>Alkaliphilus</taxon>
    </lineage>
</organism>
<name>NADE_ALKMQ</name>
<proteinExistence type="inferred from homology"/>
<dbReference type="EC" id="6.3.1.5" evidence="1"/>
<dbReference type="EMBL" id="CP000724">
    <property type="protein sequence ID" value="ABR48392.1"/>
    <property type="molecule type" value="Genomic_DNA"/>
</dbReference>
<dbReference type="RefSeq" id="WP_012063368.1">
    <property type="nucleotide sequence ID" value="NC_009633.1"/>
</dbReference>
<dbReference type="SMR" id="A6TQC4"/>
<dbReference type="STRING" id="293826.Amet_2234"/>
<dbReference type="KEGG" id="amt:Amet_2234"/>
<dbReference type="eggNOG" id="COG0171">
    <property type="taxonomic scope" value="Bacteria"/>
</dbReference>
<dbReference type="HOGENOM" id="CLU_059327_1_1_9"/>
<dbReference type="OrthoDB" id="9803818at2"/>
<dbReference type="UniPathway" id="UPA00253">
    <property type="reaction ID" value="UER00333"/>
</dbReference>
<dbReference type="Proteomes" id="UP000001572">
    <property type="component" value="Chromosome"/>
</dbReference>
<dbReference type="GO" id="GO:0005737">
    <property type="term" value="C:cytoplasm"/>
    <property type="evidence" value="ECO:0007669"/>
    <property type="project" value="InterPro"/>
</dbReference>
<dbReference type="GO" id="GO:0005524">
    <property type="term" value="F:ATP binding"/>
    <property type="evidence" value="ECO:0007669"/>
    <property type="project" value="UniProtKB-UniRule"/>
</dbReference>
<dbReference type="GO" id="GO:0004359">
    <property type="term" value="F:glutaminase activity"/>
    <property type="evidence" value="ECO:0007669"/>
    <property type="project" value="InterPro"/>
</dbReference>
<dbReference type="GO" id="GO:0046872">
    <property type="term" value="F:metal ion binding"/>
    <property type="evidence" value="ECO:0007669"/>
    <property type="project" value="UniProtKB-KW"/>
</dbReference>
<dbReference type="GO" id="GO:0003952">
    <property type="term" value="F:NAD+ synthase (glutamine-hydrolyzing) activity"/>
    <property type="evidence" value="ECO:0007669"/>
    <property type="project" value="InterPro"/>
</dbReference>
<dbReference type="GO" id="GO:0008795">
    <property type="term" value="F:NAD+ synthase activity"/>
    <property type="evidence" value="ECO:0007669"/>
    <property type="project" value="UniProtKB-UniRule"/>
</dbReference>
<dbReference type="GO" id="GO:0009435">
    <property type="term" value="P:NAD biosynthetic process"/>
    <property type="evidence" value="ECO:0007669"/>
    <property type="project" value="UniProtKB-UniRule"/>
</dbReference>
<dbReference type="CDD" id="cd00553">
    <property type="entry name" value="NAD_synthase"/>
    <property type="match status" value="1"/>
</dbReference>
<dbReference type="Gene3D" id="3.40.50.620">
    <property type="entry name" value="HUPs"/>
    <property type="match status" value="1"/>
</dbReference>
<dbReference type="HAMAP" id="MF_00193">
    <property type="entry name" value="NadE_ammonia_dep"/>
    <property type="match status" value="1"/>
</dbReference>
<dbReference type="InterPro" id="IPR022310">
    <property type="entry name" value="NAD/GMP_synthase"/>
</dbReference>
<dbReference type="InterPro" id="IPR003694">
    <property type="entry name" value="NAD_synthase"/>
</dbReference>
<dbReference type="InterPro" id="IPR022926">
    <property type="entry name" value="NH(3)-dep_NAD(+)_synth"/>
</dbReference>
<dbReference type="InterPro" id="IPR014729">
    <property type="entry name" value="Rossmann-like_a/b/a_fold"/>
</dbReference>
<dbReference type="NCBIfam" id="TIGR00552">
    <property type="entry name" value="nadE"/>
    <property type="match status" value="1"/>
</dbReference>
<dbReference type="PANTHER" id="PTHR23090:SF9">
    <property type="entry name" value="GLUTAMINE-DEPENDENT NAD(+) SYNTHETASE"/>
    <property type="match status" value="1"/>
</dbReference>
<dbReference type="PANTHER" id="PTHR23090">
    <property type="entry name" value="NH 3 /GLUTAMINE-DEPENDENT NAD + SYNTHETASE"/>
    <property type="match status" value="1"/>
</dbReference>
<dbReference type="Pfam" id="PF02540">
    <property type="entry name" value="NAD_synthase"/>
    <property type="match status" value="1"/>
</dbReference>
<dbReference type="SUPFAM" id="SSF52402">
    <property type="entry name" value="Adenine nucleotide alpha hydrolases-like"/>
    <property type="match status" value="1"/>
</dbReference>
<comment type="function">
    <text evidence="1">Catalyzes the ATP-dependent amidation of deamido-NAD to form NAD. Uses ammonia as a nitrogen source.</text>
</comment>
<comment type="catalytic activity">
    <reaction evidence="1">
        <text>deamido-NAD(+) + NH4(+) + ATP = AMP + diphosphate + NAD(+) + H(+)</text>
        <dbReference type="Rhea" id="RHEA:21188"/>
        <dbReference type="ChEBI" id="CHEBI:15378"/>
        <dbReference type="ChEBI" id="CHEBI:28938"/>
        <dbReference type="ChEBI" id="CHEBI:30616"/>
        <dbReference type="ChEBI" id="CHEBI:33019"/>
        <dbReference type="ChEBI" id="CHEBI:57540"/>
        <dbReference type="ChEBI" id="CHEBI:58437"/>
        <dbReference type="ChEBI" id="CHEBI:456215"/>
        <dbReference type="EC" id="6.3.1.5"/>
    </reaction>
</comment>
<comment type="pathway">
    <text evidence="1">Cofactor biosynthesis; NAD(+) biosynthesis; NAD(+) from deamido-NAD(+) (ammonia route): step 1/1.</text>
</comment>
<comment type="subunit">
    <text evidence="1">Homodimer.</text>
</comment>
<comment type="similarity">
    <text evidence="1">Belongs to the NAD synthetase family.</text>
</comment>
<feature type="chain" id="PRO_1000191493" description="NH(3)-dependent NAD(+) synthetase">
    <location>
        <begin position="1"/>
        <end position="247"/>
    </location>
</feature>
<feature type="binding site" evidence="1">
    <location>
        <begin position="29"/>
        <end position="36"/>
    </location>
    <ligand>
        <name>ATP</name>
        <dbReference type="ChEBI" id="CHEBI:30616"/>
    </ligand>
</feature>
<feature type="binding site" evidence="1">
    <location>
        <position position="35"/>
    </location>
    <ligand>
        <name>Mg(2+)</name>
        <dbReference type="ChEBI" id="CHEBI:18420"/>
    </ligand>
</feature>
<feature type="binding site" evidence="1">
    <location>
        <position position="120"/>
    </location>
    <ligand>
        <name>deamido-NAD(+)</name>
        <dbReference type="ChEBI" id="CHEBI:58437"/>
    </ligand>
</feature>
<feature type="binding site" evidence="1">
    <location>
        <position position="140"/>
    </location>
    <ligand>
        <name>ATP</name>
        <dbReference type="ChEBI" id="CHEBI:30616"/>
    </ligand>
</feature>
<feature type="binding site" evidence="1">
    <location>
        <position position="145"/>
    </location>
    <ligand>
        <name>Mg(2+)</name>
        <dbReference type="ChEBI" id="CHEBI:18420"/>
    </ligand>
</feature>
<feature type="binding site" evidence="1">
    <location>
        <position position="153"/>
    </location>
    <ligand>
        <name>deamido-NAD(+)</name>
        <dbReference type="ChEBI" id="CHEBI:58437"/>
    </ligand>
</feature>
<feature type="binding site" evidence="1">
    <location>
        <position position="160"/>
    </location>
    <ligand>
        <name>deamido-NAD(+)</name>
        <dbReference type="ChEBI" id="CHEBI:58437"/>
    </ligand>
</feature>
<feature type="binding site" evidence="1">
    <location>
        <position position="169"/>
    </location>
    <ligand>
        <name>ATP</name>
        <dbReference type="ChEBI" id="CHEBI:30616"/>
    </ligand>
</feature>
<feature type="binding site" evidence="1">
    <location>
        <position position="191"/>
    </location>
    <ligand>
        <name>ATP</name>
        <dbReference type="ChEBI" id="CHEBI:30616"/>
    </ligand>
</feature>
<feature type="binding site" evidence="1">
    <location>
        <begin position="237"/>
        <end position="238"/>
    </location>
    <ligand>
        <name>deamido-NAD(+)</name>
        <dbReference type="ChEBI" id="CHEBI:58437"/>
    </ligand>
</feature>
<protein>
    <recommendedName>
        <fullName evidence="1">NH(3)-dependent NAD(+) synthetase</fullName>
        <ecNumber evidence="1">6.3.1.5</ecNumber>
    </recommendedName>
</protein>
<accession>A6TQC4</accession>
<keyword id="KW-0067">ATP-binding</keyword>
<keyword id="KW-0436">Ligase</keyword>
<keyword id="KW-0460">Magnesium</keyword>
<keyword id="KW-0479">Metal-binding</keyword>
<keyword id="KW-0520">NAD</keyword>
<keyword id="KW-0547">Nucleotide-binding</keyword>
<keyword id="KW-1185">Reference proteome</keyword>
<gene>
    <name evidence="1" type="primary">nadE</name>
    <name type="ordered locus">Amet_2234</name>
</gene>
<sequence length="247" mass="27347">MEIAMKVERVVAWLREQVEESGTTGLVVGISGGIDSAVVANLIYRAFPNQSLGVILPIRSHQDDIDDGLAVAIACGIKHTTVNLDNEHENVLSKAINALQKLELYDENKLRISDANLRARLRMSTLYTIANNVNSLVVGTDNAAELHTGYFTKYGDGGVDILPIAGLTKREVYQWGEYLGVPQSVLNREPSAGLWEGQTDEKEMGTTYEMIDDFLEGKEVPQKDKEIIERLHGISHHKRVMPPLPNI</sequence>
<evidence type="ECO:0000255" key="1">
    <source>
        <dbReference type="HAMAP-Rule" id="MF_00193"/>
    </source>
</evidence>
<reference key="1">
    <citation type="journal article" date="2016" name="Genome Announc.">
        <title>Complete genome sequence of Alkaliphilus metalliredigens strain QYMF, an alkaliphilic and metal-reducing bacterium isolated from borax-contaminated leachate ponds.</title>
        <authorList>
            <person name="Hwang C."/>
            <person name="Copeland A."/>
            <person name="Lucas S."/>
            <person name="Lapidus A."/>
            <person name="Barry K."/>
            <person name="Detter J.C."/>
            <person name="Glavina Del Rio T."/>
            <person name="Hammon N."/>
            <person name="Israni S."/>
            <person name="Dalin E."/>
            <person name="Tice H."/>
            <person name="Pitluck S."/>
            <person name="Chertkov O."/>
            <person name="Brettin T."/>
            <person name="Bruce D."/>
            <person name="Han C."/>
            <person name="Schmutz J."/>
            <person name="Larimer F."/>
            <person name="Land M.L."/>
            <person name="Hauser L."/>
            <person name="Kyrpides N."/>
            <person name="Mikhailova N."/>
            <person name="Ye Q."/>
            <person name="Zhou J."/>
            <person name="Richardson P."/>
            <person name="Fields M.W."/>
        </authorList>
    </citation>
    <scope>NUCLEOTIDE SEQUENCE [LARGE SCALE GENOMIC DNA]</scope>
    <source>
        <strain>QYMF</strain>
    </source>
</reference>